<protein>
    <recommendedName>
        <fullName evidence="1">Urease subunit beta</fullName>
        <ecNumber evidence="1">3.5.1.5</ecNumber>
    </recommendedName>
    <alternativeName>
        <fullName evidence="1">Urea amidohydrolase subunit beta</fullName>
    </alternativeName>
</protein>
<organism>
    <name type="scientific">Teredinibacter turnerae (strain ATCC 39867 / T7901)</name>
    <dbReference type="NCBI Taxonomy" id="377629"/>
    <lineage>
        <taxon>Bacteria</taxon>
        <taxon>Pseudomonadati</taxon>
        <taxon>Pseudomonadota</taxon>
        <taxon>Gammaproteobacteria</taxon>
        <taxon>Cellvibrionales</taxon>
        <taxon>Cellvibrionaceae</taxon>
        <taxon>Teredinibacter</taxon>
    </lineage>
</organism>
<comment type="catalytic activity">
    <reaction evidence="1">
        <text>urea + 2 H2O + H(+) = hydrogencarbonate + 2 NH4(+)</text>
        <dbReference type="Rhea" id="RHEA:20557"/>
        <dbReference type="ChEBI" id="CHEBI:15377"/>
        <dbReference type="ChEBI" id="CHEBI:15378"/>
        <dbReference type="ChEBI" id="CHEBI:16199"/>
        <dbReference type="ChEBI" id="CHEBI:17544"/>
        <dbReference type="ChEBI" id="CHEBI:28938"/>
        <dbReference type="EC" id="3.5.1.5"/>
    </reaction>
</comment>
<comment type="pathway">
    <text evidence="1">Nitrogen metabolism; urea degradation; CO(2) and NH(3) from urea (urease route): step 1/1.</text>
</comment>
<comment type="subunit">
    <text evidence="1">Heterotrimer of UreA (gamma), UreB (beta) and UreC (alpha) subunits. Three heterotrimers associate to form the active enzyme.</text>
</comment>
<comment type="subcellular location">
    <subcellularLocation>
        <location evidence="1">Cytoplasm</location>
    </subcellularLocation>
</comment>
<comment type="similarity">
    <text evidence="1">Belongs to the urease beta subunit family.</text>
</comment>
<reference key="1">
    <citation type="journal article" date="2009" name="PLoS ONE">
        <title>The complete genome of Teredinibacter turnerae T7901: an intracellular endosymbiont of marine wood-boring bivalves (shipworms).</title>
        <authorList>
            <person name="Yang J.C."/>
            <person name="Madupu R."/>
            <person name="Durkin A.S."/>
            <person name="Ekborg N.A."/>
            <person name="Pedamallu C.S."/>
            <person name="Hostetler J.B."/>
            <person name="Radune D."/>
            <person name="Toms B.S."/>
            <person name="Henrissat B."/>
            <person name="Coutinho P.M."/>
            <person name="Schwarz S."/>
            <person name="Field L."/>
            <person name="Trindade-Silva A.E."/>
            <person name="Soares C.A.G."/>
            <person name="Elshahawi S."/>
            <person name="Hanora A."/>
            <person name="Schmidt E.W."/>
            <person name="Haygood M.G."/>
            <person name="Posfai J."/>
            <person name="Benner J."/>
            <person name="Madinger C."/>
            <person name="Nove J."/>
            <person name="Anton B."/>
            <person name="Chaudhary K."/>
            <person name="Foster J."/>
            <person name="Holman A."/>
            <person name="Kumar S."/>
            <person name="Lessard P.A."/>
            <person name="Luyten Y.A."/>
            <person name="Slatko B."/>
            <person name="Wood N."/>
            <person name="Wu B."/>
            <person name="Teplitski M."/>
            <person name="Mougous J.D."/>
            <person name="Ward N."/>
            <person name="Eisen J.A."/>
            <person name="Badger J.H."/>
            <person name="Distel D.L."/>
        </authorList>
    </citation>
    <scope>NUCLEOTIDE SEQUENCE [LARGE SCALE GENOMIC DNA]</scope>
    <source>
        <strain>ATCC 39867 / T7901</strain>
    </source>
</reference>
<name>URE2_TERTT</name>
<sequence>MIPGEYDIKDGEITLNENRKTLTLTVANTGDRPIQVGSHYHFFETNPALSFSRDATRGFRLNIAAGTAVRFEPGQDREVELVEIAGDKTVYGFRGEIMGELEGGSHE</sequence>
<keyword id="KW-0963">Cytoplasm</keyword>
<keyword id="KW-0378">Hydrolase</keyword>
<keyword id="KW-1185">Reference proteome</keyword>
<accession>C5BUP0</accession>
<dbReference type="EC" id="3.5.1.5" evidence="1"/>
<dbReference type="EMBL" id="CP001614">
    <property type="protein sequence ID" value="ACR11356.1"/>
    <property type="molecule type" value="Genomic_DNA"/>
</dbReference>
<dbReference type="RefSeq" id="WP_015817468.1">
    <property type="nucleotide sequence ID" value="NC_012997.1"/>
</dbReference>
<dbReference type="SMR" id="C5BUP0"/>
<dbReference type="STRING" id="377629.TERTU_4207"/>
<dbReference type="KEGG" id="ttu:TERTU_4207"/>
<dbReference type="eggNOG" id="COG0832">
    <property type="taxonomic scope" value="Bacteria"/>
</dbReference>
<dbReference type="HOGENOM" id="CLU_129707_1_1_6"/>
<dbReference type="OrthoDB" id="9797217at2"/>
<dbReference type="UniPathway" id="UPA00258">
    <property type="reaction ID" value="UER00370"/>
</dbReference>
<dbReference type="Proteomes" id="UP000009080">
    <property type="component" value="Chromosome"/>
</dbReference>
<dbReference type="GO" id="GO:0035550">
    <property type="term" value="C:urease complex"/>
    <property type="evidence" value="ECO:0007669"/>
    <property type="project" value="InterPro"/>
</dbReference>
<dbReference type="GO" id="GO:0009039">
    <property type="term" value="F:urease activity"/>
    <property type="evidence" value="ECO:0007669"/>
    <property type="project" value="UniProtKB-UniRule"/>
</dbReference>
<dbReference type="GO" id="GO:0043419">
    <property type="term" value="P:urea catabolic process"/>
    <property type="evidence" value="ECO:0007669"/>
    <property type="project" value="UniProtKB-UniRule"/>
</dbReference>
<dbReference type="CDD" id="cd00407">
    <property type="entry name" value="Urease_beta"/>
    <property type="match status" value="1"/>
</dbReference>
<dbReference type="FunFam" id="2.10.150.10:FF:000001">
    <property type="entry name" value="Urease subunit beta"/>
    <property type="match status" value="1"/>
</dbReference>
<dbReference type="Gene3D" id="2.10.150.10">
    <property type="entry name" value="Urease, beta subunit"/>
    <property type="match status" value="1"/>
</dbReference>
<dbReference type="HAMAP" id="MF_01954">
    <property type="entry name" value="Urease_beta"/>
    <property type="match status" value="1"/>
</dbReference>
<dbReference type="InterPro" id="IPR002019">
    <property type="entry name" value="Urease_beta-like"/>
</dbReference>
<dbReference type="InterPro" id="IPR036461">
    <property type="entry name" value="Urease_betasu_sf"/>
</dbReference>
<dbReference type="InterPro" id="IPR050069">
    <property type="entry name" value="Urease_subunit"/>
</dbReference>
<dbReference type="NCBIfam" id="NF009682">
    <property type="entry name" value="PRK13203.1"/>
    <property type="match status" value="1"/>
</dbReference>
<dbReference type="NCBIfam" id="TIGR00192">
    <property type="entry name" value="urease_beta"/>
    <property type="match status" value="1"/>
</dbReference>
<dbReference type="PANTHER" id="PTHR33569">
    <property type="entry name" value="UREASE"/>
    <property type="match status" value="1"/>
</dbReference>
<dbReference type="PANTHER" id="PTHR33569:SF1">
    <property type="entry name" value="UREASE"/>
    <property type="match status" value="1"/>
</dbReference>
<dbReference type="Pfam" id="PF00699">
    <property type="entry name" value="Urease_beta"/>
    <property type="match status" value="1"/>
</dbReference>
<dbReference type="SUPFAM" id="SSF51278">
    <property type="entry name" value="Urease, beta-subunit"/>
    <property type="match status" value="1"/>
</dbReference>
<evidence type="ECO:0000255" key="1">
    <source>
        <dbReference type="HAMAP-Rule" id="MF_01954"/>
    </source>
</evidence>
<gene>
    <name evidence="1" type="primary">ureB</name>
    <name type="ordered locus">TERTU_4207</name>
</gene>
<proteinExistence type="inferred from homology"/>
<feature type="chain" id="PRO_1000216205" description="Urease subunit beta">
    <location>
        <begin position="1"/>
        <end position="107"/>
    </location>
</feature>